<dbReference type="EMBL" id="AE000657">
    <property type="protein sequence ID" value="AAC07118.1"/>
    <property type="molecule type" value="Genomic_DNA"/>
</dbReference>
<dbReference type="PIR" id="A70391">
    <property type="entry name" value="A70391"/>
</dbReference>
<dbReference type="RefSeq" id="NP_213719.1">
    <property type="nucleotide sequence ID" value="NC_000918.1"/>
</dbReference>
<dbReference type="SMR" id="O67156"/>
<dbReference type="FunCoup" id="O67156">
    <property type="interactions" value="351"/>
</dbReference>
<dbReference type="STRING" id="224324.aq_1057"/>
<dbReference type="EnsemblBacteria" id="AAC07118">
    <property type="protein sequence ID" value="AAC07118"/>
    <property type="gene ID" value="aq_1057"/>
</dbReference>
<dbReference type="KEGG" id="aae:aq_1057"/>
<dbReference type="eggNOG" id="COG0806">
    <property type="taxonomic scope" value="Bacteria"/>
</dbReference>
<dbReference type="HOGENOM" id="CLU_077636_3_2_0"/>
<dbReference type="InParanoid" id="O67156"/>
<dbReference type="OrthoDB" id="9810331at2"/>
<dbReference type="Proteomes" id="UP000000798">
    <property type="component" value="Chromosome"/>
</dbReference>
<dbReference type="GO" id="GO:0005829">
    <property type="term" value="C:cytosol"/>
    <property type="evidence" value="ECO:0000318"/>
    <property type="project" value="GO_Central"/>
</dbReference>
<dbReference type="GO" id="GO:0005840">
    <property type="term" value="C:ribosome"/>
    <property type="evidence" value="ECO:0007669"/>
    <property type="project" value="InterPro"/>
</dbReference>
<dbReference type="GO" id="GO:0043022">
    <property type="term" value="F:ribosome binding"/>
    <property type="evidence" value="ECO:0007669"/>
    <property type="project" value="InterPro"/>
</dbReference>
<dbReference type="GO" id="GO:0030490">
    <property type="term" value="P:maturation of SSU-rRNA"/>
    <property type="evidence" value="ECO:0000318"/>
    <property type="project" value="GO_Central"/>
</dbReference>
<dbReference type="Gene3D" id="2.30.30.240">
    <property type="entry name" value="PRC-barrel domain"/>
    <property type="match status" value="1"/>
</dbReference>
<dbReference type="Gene3D" id="2.40.30.60">
    <property type="entry name" value="RimM"/>
    <property type="match status" value="1"/>
</dbReference>
<dbReference type="HAMAP" id="MF_00014">
    <property type="entry name" value="Ribosome_mat_RimM"/>
    <property type="match status" value="1"/>
</dbReference>
<dbReference type="InterPro" id="IPR011033">
    <property type="entry name" value="PRC_barrel-like_sf"/>
</dbReference>
<dbReference type="InterPro" id="IPR056792">
    <property type="entry name" value="PRC_RimM"/>
</dbReference>
<dbReference type="InterPro" id="IPR011961">
    <property type="entry name" value="RimM"/>
</dbReference>
<dbReference type="InterPro" id="IPR002676">
    <property type="entry name" value="RimM_N"/>
</dbReference>
<dbReference type="InterPro" id="IPR036976">
    <property type="entry name" value="RimM_N_sf"/>
</dbReference>
<dbReference type="InterPro" id="IPR009000">
    <property type="entry name" value="Transl_B-barrel_sf"/>
</dbReference>
<dbReference type="NCBIfam" id="TIGR02273">
    <property type="entry name" value="16S_RimM"/>
    <property type="match status" value="1"/>
</dbReference>
<dbReference type="PANTHER" id="PTHR33692">
    <property type="entry name" value="RIBOSOME MATURATION FACTOR RIMM"/>
    <property type="match status" value="1"/>
</dbReference>
<dbReference type="PANTHER" id="PTHR33692:SF1">
    <property type="entry name" value="RIBOSOME MATURATION FACTOR RIMM"/>
    <property type="match status" value="1"/>
</dbReference>
<dbReference type="Pfam" id="PF24986">
    <property type="entry name" value="PRC_RimM"/>
    <property type="match status" value="1"/>
</dbReference>
<dbReference type="Pfam" id="PF01782">
    <property type="entry name" value="RimM"/>
    <property type="match status" value="1"/>
</dbReference>
<dbReference type="SUPFAM" id="SSF50346">
    <property type="entry name" value="PRC-barrel domain"/>
    <property type="match status" value="1"/>
</dbReference>
<dbReference type="SUPFAM" id="SSF50447">
    <property type="entry name" value="Translation proteins"/>
    <property type="match status" value="1"/>
</dbReference>
<reference key="1">
    <citation type="journal article" date="1998" name="Nature">
        <title>The complete genome of the hyperthermophilic bacterium Aquifex aeolicus.</title>
        <authorList>
            <person name="Deckert G."/>
            <person name="Warren P.V."/>
            <person name="Gaasterland T."/>
            <person name="Young W.G."/>
            <person name="Lenox A.L."/>
            <person name="Graham D.E."/>
            <person name="Overbeek R."/>
            <person name="Snead M.A."/>
            <person name="Keller M."/>
            <person name="Aujay M."/>
            <person name="Huber R."/>
            <person name="Feldman R.A."/>
            <person name="Short J.M."/>
            <person name="Olsen G.J."/>
            <person name="Swanson R.V."/>
        </authorList>
    </citation>
    <scope>NUCLEOTIDE SEQUENCE [LARGE SCALE GENOMIC DNA]</scope>
    <source>
        <strain>VF5</strain>
    </source>
</reference>
<evidence type="ECO:0000255" key="1">
    <source>
        <dbReference type="HAMAP-Rule" id="MF_00014"/>
    </source>
</evidence>
<accession>O67156</accession>
<keyword id="KW-0143">Chaperone</keyword>
<keyword id="KW-0963">Cytoplasm</keyword>
<keyword id="KW-1185">Reference proteome</keyword>
<keyword id="KW-0690">Ribosome biogenesis</keyword>
<keyword id="KW-0698">rRNA processing</keyword>
<protein>
    <recommendedName>
        <fullName evidence="1">Ribosome maturation factor RimM</fullName>
    </recommendedName>
</protein>
<feature type="chain" id="PRO_0000163243" description="Ribosome maturation factor RimM">
    <location>
        <begin position="1"/>
        <end position="166"/>
    </location>
</feature>
<feature type="domain" description="PRC barrel" evidence="1">
    <location>
        <begin position="95"/>
        <end position="164"/>
    </location>
</feature>
<proteinExistence type="inferred from homology"/>
<gene>
    <name evidence="1" type="primary">rimM</name>
    <name type="ordered locus">aq_1057</name>
</gene>
<name>RIMM_AQUAE</name>
<sequence length="166" mass="19223">MMEEYVVIGKVLDTFGLEGELKVRPYAPPEVFENLEKVYLKRKGGDWVPFEVEWVDFIDDKVIIKFKGYDSIDEVEQFKGAKLFLPKEELPELGEEEYYAYELVGMEVETDKGKKLGKVERVQDMGPYDALVLDKENLLVPFVSDIVLKVDKENKKIIVKEELLPV</sequence>
<organism>
    <name type="scientific">Aquifex aeolicus (strain VF5)</name>
    <dbReference type="NCBI Taxonomy" id="224324"/>
    <lineage>
        <taxon>Bacteria</taxon>
        <taxon>Pseudomonadati</taxon>
        <taxon>Aquificota</taxon>
        <taxon>Aquificia</taxon>
        <taxon>Aquificales</taxon>
        <taxon>Aquificaceae</taxon>
        <taxon>Aquifex</taxon>
    </lineage>
</organism>
<comment type="function">
    <text evidence="1">An accessory protein needed during the final step in the assembly of 30S ribosomal subunit, possibly for assembly of the head region. Essential for efficient processing of 16S rRNA. May be needed both before and after RbfA during the maturation of 16S rRNA. It has affinity for free ribosomal 30S subunits but not for 70S ribosomes.</text>
</comment>
<comment type="subunit">
    <text evidence="1">Binds ribosomal protein uS19.</text>
</comment>
<comment type="subcellular location">
    <subcellularLocation>
        <location evidence="1">Cytoplasm</location>
    </subcellularLocation>
</comment>
<comment type="domain">
    <text evidence="1">The PRC barrel domain binds ribosomal protein uS19.</text>
</comment>
<comment type="similarity">
    <text evidence="1">Belongs to the RimM family.</text>
</comment>